<keyword id="KW-0378">Hydrolase</keyword>
<keyword id="KW-0479">Metal-binding</keyword>
<keyword id="KW-0540">Nuclease</keyword>
<keyword id="KW-0539">Nucleus</keyword>
<keyword id="KW-1185">Reference proteome</keyword>
<keyword id="KW-0862">Zinc</keyword>
<proteinExistence type="evidence at transcript level"/>
<name>TAT3B_XENLA</name>
<reference key="1">
    <citation type="submission" date="2004-06" db="EMBL/GenBank/DDBJ databases">
        <authorList>
            <consortium name="NIH - Xenopus Gene Collection (XGC) project"/>
        </authorList>
    </citation>
    <scope>NUCLEOTIDE SEQUENCE [LARGE SCALE MRNA]</scope>
    <source>
        <tissue>Eye</tissue>
    </source>
</reference>
<organism>
    <name type="scientific">Xenopus laevis</name>
    <name type="common">African clawed frog</name>
    <dbReference type="NCBI Taxonomy" id="8355"/>
    <lineage>
        <taxon>Eukaryota</taxon>
        <taxon>Metazoa</taxon>
        <taxon>Chordata</taxon>
        <taxon>Craniata</taxon>
        <taxon>Vertebrata</taxon>
        <taxon>Euteleostomi</taxon>
        <taxon>Amphibia</taxon>
        <taxon>Batrachia</taxon>
        <taxon>Anura</taxon>
        <taxon>Pipoidea</taxon>
        <taxon>Pipidae</taxon>
        <taxon>Xenopodinae</taxon>
        <taxon>Xenopus</taxon>
        <taxon>Xenopus</taxon>
    </lineage>
</organism>
<evidence type="ECO:0000250" key="1">
    <source>
        <dbReference type="UniProtKB" id="Q17R31"/>
    </source>
</evidence>
<evidence type="ECO:0000250" key="2">
    <source>
        <dbReference type="UniProtKB" id="Q6P1N9"/>
    </source>
</evidence>
<evidence type="ECO:0000305" key="3"/>
<accession>Q6GPM3</accession>
<gene>
    <name type="primary">tatdn3-b</name>
</gene>
<feature type="chain" id="PRO_0000313599" description="Putative deoxyribonuclease tatdn3-B">
    <location>
        <begin position="1"/>
        <end position="255"/>
    </location>
</feature>
<feature type="binding site" evidence="1">
    <location>
        <position position="11"/>
    </location>
    <ligand>
        <name>Zn(2+)</name>
        <dbReference type="ChEBI" id="CHEBI:29105"/>
        <label>1</label>
    </ligand>
</feature>
<feature type="binding site" evidence="1">
    <location>
        <position position="13"/>
    </location>
    <ligand>
        <name>Zn(2+)</name>
        <dbReference type="ChEBI" id="CHEBI:29105"/>
        <label>1</label>
    </ligand>
</feature>
<feature type="binding site" evidence="1">
    <location>
        <position position="106"/>
    </location>
    <ligand>
        <name>Zn(2+)</name>
        <dbReference type="ChEBI" id="CHEBI:29105"/>
        <label>1</label>
    </ligand>
</feature>
<feature type="binding site" evidence="1">
    <location>
        <position position="106"/>
    </location>
    <ligand>
        <name>Zn(2+)</name>
        <dbReference type="ChEBI" id="CHEBI:29105"/>
        <label>2</label>
    </ligand>
</feature>
<feature type="binding site" evidence="1">
    <location>
        <position position="129"/>
    </location>
    <ligand>
        <name>Zn(2+)</name>
        <dbReference type="ChEBI" id="CHEBI:29105"/>
        <label>2</label>
    </ligand>
</feature>
<feature type="binding site" evidence="1">
    <location>
        <position position="152"/>
    </location>
    <ligand>
        <name>Zn(2+)</name>
        <dbReference type="ChEBI" id="CHEBI:29105"/>
        <label>2</label>
    </ligand>
</feature>
<feature type="binding site" evidence="1">
    <location>
        <position position="199"/>
    </location>
    <ligand>
        <name>Zn(2+)</name>
        <dbReference type="ChEBI" id="CHEBI:29105"/>
        <label>1</label>
    </ligand>
</feature>
<comment type="function">
    <text evidence="1">Exhibits 3'-exonuclease activities and apurinic/apyrimidinic (AP) endonuclease (in vitro). Show preferential AP endonuclease activity on double-stranded DNA substrates and 3'- exonuclease activity on single-stranded DNA.</text>
</comment>
<comment type="cofactor">
    <cofactor evidence="1">
        <name>Mn(2+)</name>
        <dbReference type="ChEBI" id="CHEBI:29035"/>
    </cofactor>
    <cofactor evidence="1">
        <name>Ca(2+)</name>
        <dbReference type="ChEBI" id="CHEBI:29108"/>
    </cofactor>
    <cofactor evidence="1">
        <name>Mg(2+)</name>
        <dbReference type="ChEBI" id="CHEBI:18420"/>
    </cofactor>
    <cofactor evidence="1">
        <name>Zn(2+)</name>
        <dbReference type="ChEBI" id="CHEBI:29105"/>
    </cofactor>
    <text evidence="1 2">Binds 2 Zn(2+) per subunit (By similarity). Exhibits AP endonuclease and 3'-exonuclease activities in the presence of Mg(2+) and Mn(2+). In contrast, in the presence of Ca(2+), shows AP endonuclease activity exclusively (By similarity).</text>
</comment>
<comment type="activity regulation">
    <text evidence="1">The 3'-exonuclease activity is sensitive to the metal ion present in the active site, whereas the AP endodeoxyribonuclease activity is observed in a variety of divalent metal cofactors. 3'-exoxonuclease activity is suppressed in the presence of Ca(2+), Zn(2+) and Ni(2+).</text>
</comment>
<comment type="subcellular location">
    <subcellularLocation>
        <location evidence="3">Nucleus</location>
    </subcellularLocation>
</comment>
<comment type="similarity">
    <text evidence="3">Belongs to the metallo-dependent hydrolases superfamily. TatD-type hydrolase family.</text>
</comment>
<protein>
    <recommendedName>
        <fullName>Putative deoxyribonuclease tatdn3-B</fullName>
        <ecNumber>3.1.21.-</ecNumber>
    </recommendedName>
</protein>
<dbReference type="EC" id="3.1.21.-"/>
<dbReference type="EMBL" id="BC073091">
    <property type="protein sequence ID" value="AAH73091.1"/>
    <property type="molecule type" value="mRNA"/>
</dbReference>
<dbReference type="RefSeq" id="NP_001085648.1">
    <property type="nucleotide sequence ID" value="NM_001092179.1"/>
</dbReference>
<dbReference type="SMR" id="Q6GPM3"/>
<dbReference type="DNASU" id="444074"/>
<dbReference type="GeneID" id="444074"/>
<dbReference type="KEGG" id="xla:444074"/>
<dbReference type="OrthoDB" id="413993at2759"/>
<dbReference type="Proteomes" id="UP000186698">
    <property type="component" value="Chromosome 5S"/>
</dbReference>
<dbReference type="Bgee" id="444074">
    <property type="expression patterns" value="Expressed in testis and 20 other cell types or tissues"/>
</dbReference>
<dbReference type="GO" id="GO:0005634">
    <property type="term" value="C:nucleus"/>
    <property type="evidence" value="ECO:0007669"/>
    <property type="project" value="UniProtKB-SubCell"/>
</dbReference>
<dbReference type="GO" id="GO:0046872">
    <property type="term" value="F:metal ion binding"/>
    <property type="evidence" value="ECO:0007669"/>
    <property type="project" value="UniProtKB-KW"/>
</dbReference>
<dbReference type="GO" id="GO:0004518">
    <property type="term" value="F:nuclease activity"/>
    <property type="evidence" value="ECO:0007669"/>
    <property type="project" value="UniProtKB-KW"/>
</dbReference>
<dbReference type="CDD" id="cd01310">
    <property type="entry name" value="TatD_DNAse"/>
    <property type="match status" value="1"/>
</dbReference>
<dbReference type="Gene3D" id="3.20.20.140">
    <property type="entry name" value="Metal-dependent hydrolases"/>
    <property type="match status" value="1"/>
</dbReference>
<dbReference type="InterPro" id="IPR032466">
    <property type="entry name" value="Metal_Hydrolase"/>
</dbReference>
<dbReference type="InterPro" id="IPR001130">
    <property type="entry name" value="TatD-like"/>
</dbReference>
<dbReference type="PANTHER" id="PTHR46317:SF7">
    <property type="entry name" value="DEOXYRIBONUCLEASE TATDN3-RELATED"/>
    <property type="match status" value="1"/>
</dbReference>
<dbReference type="PANTHER" id="PTHR46317">
    <property type="entry name" value="HYDROLASE OF PHP SUPERFAMILY-RELATED PROTEIN"/>
    <property type="match status" value="1"/>
</dbReference>
<dbReference type="Pfam" id="PF01026">
    <property type="entry name" value="TatD_DNase"/>
    <property type="match status" value="2"/>
</dbReference>
<dbReference type="PIRSF" id="PIRSF005902">
    <property type="entry name" value="DNase_TatD"/>
    <property type="match status" value="1"/>
</dbReference>
<dbReference type="SUPFAM" id="SSF51556">
    <property type="entry name" value="Metallo-dependent hydrolases"/>
    <property type="match status" value="1"/>
</dbReference>
<sequence length="255" mass="28090">MARSVVLVDCHWHLTASEFDHDIGSVLEDAKTIGLCALVAVAEHSGEFEKVIELSRRNAGLVFPCLGVHPVQGSATGPQRSATLQDVEDALPMIEQYRDELVAIGEVGLDFTPRIACTDDQKEEQRNVHSRSAGRPTINLLRDQGAEKVLLHAFDGKPSVAMEGVKAGFYFSIPPSIIRSEQQKLVKQLPLENMCLETDSPALGPEKQVRNEPKNILHSAEYIARVKGISLEEVIEITTKNALKVFPRLCHVLPK</sequence>